<feature type="chain" id="PRO_0000379329" description="ATP-dependent helicase/nuclease subunit A">
    <location>
        <begin position="1"/>
        <end position="1214"/>
    </location>
</feature>
<feature type="domain" description="UvrD-like helicase ATP-binding" evidence="1">
    <location>
        <begin position="27"/>
        <end position="483"/>
    </location>
</feature>
<feature type="domain" description="UvrD-like helicase C-terminal" evidence="1">
    <location>
        <begin position="512"/>
        <end position="800"/>
    </location>
</feature>
<feature type="binding site" evidence="1">
    <location>
        <begin position="48"/>
        <end position="55"/>
    </location>
    <ligand>
        <name>ATP</name>
        <dbReference type="ChEBI" id="CHEBI:30616"/>
    </ligand>
</feature>
<dbReference type="EC" id="3.1.-.-" evidence="1"/>
<dbReference type="EC" id="5.6.2.4" evidence="1"/>
<dbReference type="EMBL" id="FM204884">
    <property type="protein sequence ID" value="CAW99551.1"/>
    <property type="molecule type" value="Genomic_DNA"/>
</dbReference>
<dbReference type="SMR" id="C0MGY6"/>
<dbReference type="KEGG" id="seq:SZO_11320"/>
<dbReference type="eggNOG" id="COG1074">
    <property type="taxonomic scope" value="Bacteria"/>
</dbReference>
<dbReference type="HOGENOM" id="CLU_001114_3_1_9"/>
<dbReference type="Proteomes" id="UP000001368">
    <property type="component" value="Chromosome"/>
</dbReference>
<dbReference type="GO" id="GO:0005829">
    <property type="term" value="C:cytosol"/>
    <property type="evidence" value="ECO:0007669"/>
    <property type="project" value="TreeGrafter"/>
</dbReference>
<dbReference type="GO" id="GO:0033202">
    <property type="term" value="C:DNA helicase complex"/>
    <property type="evidence" value="ECO:0007669"/>
    <property type="project" value="TreeGrafter"/>
</dbReference>
<dbReference type="GO" id="GO:0043138">
    <property type="term" value="F:3'-5' DNA helicase activity"/>
    <property type="evidence" value="ECO:0007669"/>
    <property type="project" value="UniProtKB-UniRule"/>
</dbReference>
<dbReference type="GO" id="GO:0008408">
    <property type="term" value="F:3'-5' exonuclease activity"/>
    <property type="evidence" value="ECO:0007669"/>
    <property type="project" value="UniProtKB-UniRule"/>
</dbReference>
<dbReference type="GO" id="GO:0005524">
    <property type="term" value="F:ATP binding"/>
    <property type="evidence" value="ECO:0007669"/>
    <property type="project" value="UniProtKB-UniRule"/>
</dbReference>
<dbReference type="GO" id="GO:0016887">
    <property type="term" value="F:ATP hydrolysis activity"/>
    <property type="evidence" value="ECO:0007669"/>
    <property type="project" value="RHEA"/>
</dbReference>
<dbReference type="GO" id="GO:0003690">
    <property type="term" value="F:double-stranded DNA binding"/>
    <property type="evidence" value="ECO:0007669"/>
    <property type="project" value="UniProtKB-UniRule"/>
</dbReference>
<dbReference type="GO" id="GO:0000724">
    <property type="term" value="P:double-strand break repair via homologous recombination"/>
    <property type="evidence" value="ECO:0007669"/>
    <property type="project" value="UniProtKB-UniRule"/>
</dbReference>
<dbReference type="CDD" id="cd17932">
    <property type="entry name" value="DEXQc_UvrD"/>
    <property type="match status" value="1"/>
</dbReference>
<dbReference type="Gene3D" id="3.90.320.10">
    <property type="match status" value="1"/>
</dbReference>
<dbReference type="Gene3D" id="3.40.50.300">
    <property type="entry name" value="P-loop containing nucleotide triphosphate hydrolases"/>
    <property type="match status" value="4"/>
</dbReference>
<dbReference type="Gene3D" id="1.10.486.10">
    <property type="entry name" value="PCRA, domain 4"/>
    <property type="match status" value="1"/>
</dbReference>
<dbReference type="HAMAP" id="MF_01451">
    <property type="entry name" value="AddA"/>
    <property type="match status" value="1"/>
</dbReference>
<dbReference type="InterPro" id="IPR014152">
    <property type="entry name" value="AddA"/>
</dbReference>
<dbReference type="InterPro" id="IPR014017">
    <property type="entry name" value="DNA_helicase_UvrD-like_C"/>
</dbReference>
<dbReference type="InterPro" id="IPR000212">
    <property type="entry name" value="DNA_helicase_UvrD/REP"/>
</dbReference>
<dbReference type="InterPro" id="IPR027417">
    <property type="entry name" value="P-loop_NTPase"/>
</dbReference>
<dbReference type="InterPro" id="IPR011604">
    <property type="entry name" value="PDDEXK-like_dom_sf"/>
</dbReference>
<dbReference type="InterPro" id="IPR038726">
    <property type="entry name" value="PDDEXK_AddAB-type"/>
</dbReference>
<dbReference type="InterPro" id="IPR011335">
    <property type="entry name" value="Restrct_endonuc-II-like"/>
</dbReference>
<dbReference type="InterPro" id="IPR014016">
    <property type="entry name" value="UvrD-like_ATP-bd"/>
</dbReference>
<dbReference type="NCBIfam" id="TIGR02785">
    <property type="entry name" value="addA_Gpos"/>
    <property type="match status" value="1"/>
</dbReference>
<dbReference type="PANTHER" id="PTHR11070:SF48">
    <property type="entry name" value="ATP-DEPENDENT HELICASE_NUCLEASE SUBUNIT A"/>
    <property type="match status" value="1"/>
</dbReference>
<dbReference type="PANTHER" id="PTHR11070">
    <property type="entry name" value="UVRD / RECB / PCRA DNA HELICASE FAMILY MEMBER"/>
    <property type="match status" value="1"/>
</dbReference>
<dbReference type="Pfam" id="PF12705">
    <property type="entry name" value="PDDEXK_1"/>
    <property type="match status" value="1"/>
</dbReference>
<dbReference type="Pfam" id="PF00580">
    <property type="entry name" value="UvrD-helicase"/>
    <property type="match status" value="1"/>
</dbReference>
<dbReference type="Pfam" id="PF13361">
    <property type="entry name" value="UvrD_C"/>
    <property type="match status" value="1"/>
</dbReference>
<dbReference type="SUPFAM" id="SSF52540">
    <property type="entry name" value="P-loop containing nucleoside triphosphate hydrolases"/>
    <property type="match status" value="1"/>
</dbReference>
<dbReference type="SUPFAM" id="SSF52980">
    <property type="entry name" value="Restriction endonuclease-like"/>
    <property type="match status" value="1"/>
</dbReference>
<dbReference type="PROSITE" id="PS51198">
    <property type="entry name" value="UVRD_HELICASE_ATP_BIND"/>
    <property type="match status" value="1"/>
</dbReference>
<dbReference type="PROSITE" id="PS51217">
    <property type="entry name" value="UVRD_HELICASE_CTER"/>
    <property type="match status" value="1"/>
</dbReference>
<comment type="function">
    <text evidence="1">The heterodimer acts as both an ATP-dependent DNA helicase and an ATP-dependent, dual-direction single-stranded exonuclease. Recognizes the chi site generating a DNA molecule suitable for the initiation of homologous recombination. The AddA nuclease domain is required for chi fragment generation; this subunit has the helicase and 3' -&gt; 5' nuclease activities.</text>
</comment>
<comment type="catalytic activity">
    <reaction evidence="1">
        <text>Couples ATP hydrolysis with the unwinding of duplex DNA by translocating in the 3'-5' direction.</text>
        <dbReference type="EC" id="5.6.2.4"/>
    </reaction>
</comment>
<comment type="catalytic activity">
    <reaction evidence="1">
        <text>ATP + H2O = ADP + phosphate + H(+)</text>
        <dbReference type="Rhea" id="RHEA:13065"/>
        <dbReference type="ChEBI" id="CHEBI:15377"/>
        <dbReference type="ChEBI" id="CHEBI:15378"/>
        <dbReference type="ChEBI" id="CHEBI:30616"/>
        <dbReference type="ChEBI" id="CHEBI:43474"/>
        <dbReference type="ChEBI" id="CHEBI:456216"/>
        <dbReference type="EC" id="5.6.2.4"/>
    </reaction>
</comment>
<comment type="cofactor">
    <cofactor evidence="1">
        <name>Mg(2+)</name>
        <dbReference type="ChEBI" id="CHEBI:18420"/>
    </cofactor>
</comment>
<comment type="subunit">
    <text evidence="1">Heterodimer of AddA and AddB/RexB.</text>
</comment>
<comment type="similarity">
    <text evidence="1">Belongs to the helicase family. AddA subfamily.</text>
</comment>
<keyword id="KW-0067">ATP-binding</keyword>
<keyword id="KW-0227">DNA damage</keyword>
<keyword id="KW-0234">DNA repair</keyword>
<keyword id="KW-0238">DNA-binding</keyword>
<keyword id="KW-0269">Exonuclease</keyword>
<keyword id="KW-0347">Helicase</keyword>
<keyword id="KW-0378">Hydrolase</keyword>
<keyword id="KW-0413">Isomerase</keyword>
<keyword id="KW-0540">Nuclease</keyword>
<keyword id="KW-0547">Nucleotide-binding</keyword>
<sequence length="1214" mass="138272">MRIDEGFLTPEAIARLQQEEALSDKTHKRTAQQIEAIYSSGQNILVSASAGSGKTFVMVERILDKILRGIPVDRLFISTFTVKAATELIERIEKKLHTAIAETQDYQLKAYLNDQLQALSQADIGTMDAFAQKLVHQHGYVLGISPHFRIIQDKAEQDILKREVFRQVFEDYMSQTDNKAFIQLVQNFSGRRKDSSAFREIVDSIYAFSQSTANPSSWLAEVFLRGSKTYTSFADIPDQAVDTLLACMQDTADQLRDLTDMEGYAQTTKAGKLTAKYTKHLKMIDSLYEWALHFDSLYGKARLGQLAQELTALLPSGADITVAGHKYPIFKSLQEQLVGFRHLETILAYQQESLPLLEVLQAFVISFSEAYLAAKMQENAFEFSDIAHFAIEILQQAPDIRQAYQGHYHEVMVDEYQDNNHMQERLLELLSNGHNRFMVGDIKQSIYRFRQADPQIFNQKFKDYQSNPEHGKLILLKENFRSQSEVLNVTNAVFSRLMDESLGEITYDDKHQLVAGSEAQKQLHPENRAQLLLYNTDQAQEGTEEASTNDGISAGEVTLVAKEIIRLYNEEKVAFEDITLLVSSRTRNDTIFQVFNQYGIPLVADGGQENYLKSVEVMVMLDTLRSINNPLNDYALVALMRSPMFSFDEDQLARISLQSSSQDQPQAFYDKLSNSLRGQGEHPGLIGQELMTKLVDFDRTLSDWRQFAKLHSLYELIWKVFNDRFYFDFVASQPKAEQAQANLYALAIRADQFEQSGYKGLSRFIGMIDKVLETQNDLADVEVERPKHAVNLMTIHKSKGLEFHYVFILNCDKRFAMADLQAPIILNRDEGIGIKYVANVKELLRDEKLASLKVTMETLPYQLNKQQLRLATLSEQMRLLYVAMTRAEKKVYLVGKASKEKIQAKTADNSSEGRLALASRERLLSFQDWLLAITATFSKEDLFIDVRFVDDSDLTAEAVGQLRSSGLLQADDLKDNRQTEDIARALDMLDKVSKLNASYQAAIELPTVRTPSQLKTLYEPLMDTDGVDIIDQPYHRPKSFDLPDFSKKKAVEPSQIGSSLHELMQRIPMSDQVTAGDIEQALQFVSADAEVKARIDIKKVTSFFATTELGQLLQEHHQCLHREAPFAMLKKDSLSQEQYVVRGIIDGYLLFEDRIVLFDYKTDHYQHSAELKQRYQQQMDLYAEALSQSYGIARIEKYLVLMGGSQLEVVRLDE</sequence>
<gene>
    <name evidence="1" type="primary">addA</name>
    <name type="ordered locus">SZO_11320</name>
</gene>
<name>ADDA_STRS7</name>
<evidence type="ECO:0000255" key="1">
    <source>
        <dbReference type="HAMAP-Rule" id="MF_01451"/>
    </source>
</evidence>
<protein>
    <recommendedName>
        <fullName evidence="1">ATP-dependent helicase/nuclease subunit A</fullName>
        <ecNumber evidence="1">3.1.-.-</ecNumber>
        <ecNumber evidence="1">5.6.2.4</ecNumber>
    </recommendedName>
    <alternativeName>
        <fullName evidence="1">ATP-dependent helicase/nuclease AddA</fullName>
    </alternativeName>
    <alternativeName>
        <fullName evidence="1">DNA 3'-5' helicase AddA</fullName>
    </alternativeName>
</protein>
<reference key="1">
    <citation type="journal article" date="2009" name="PLoS Pathog.">
        <title>Genomic evidence for the evolution of Streptococcus equi: host restriction, increased virulence, and genetic exchange with human pathogens.</title>
        <authorList>
            <person name="Holden M.T.G."/>
            <person name="Heather Z."/>
            <person name="Paillot R."/>
            <person name="Steward K.F."/>
            <person name="Webb K."/>
            <person name="Ainslie F."/>
            <person name="Jourdan T."/>
            <person name="Bason N.C."/>
            <person name="Holroyd N.E."/>
            <person name="Mungall K."/>
            <person name="Quail M.A."/>
            <person name="Sanders M."/>
            <person name="Simmonds M."/>
            <person name="Willey D."/>
            <person name="Brooks K."/>
            <person name="Aanensen D.M."/>
            <person name="Spratt B.G."/>
            <person name="Jolley K.A."/>
            <person name="Maiden M.C.J."/>
            <person name="Kehoe M."/>
            <person name="Chanter N."/>
            <person name="Bentley S.D."/>
            <person name="Robinson C."/>
            <person name="Maskell D.J."/>
            <person name="Parkhill J."/>
            <person name="Waller A.S."/>
        </authorList>
    </citation>
    <scope>NUCLEOTIDE SEQUENCE [LARGE SCALE GENOMIC DNA]</scope>
    <source>
        <strain>H70</strain>
    </source>
</reference>
<organism>
    <name type="scientific">Streptococcus equi subsp. zooepidemicus (strain H70)</name>
    <dbReference type="NCBI Taxonomy" id="553483"/>
    <lineage>
        <taxon>Bacteria</taxon>
        <taxon>Bacillati</taxon>
        <taxon>Bacillota</taxon>
        <taxon>Bacilli</taxon>
        <taxon>Lactobacillales</taxon>
        <taxon>Streptococcaceae</taxon>
        <taxon>Streptococcus</taxon>
    </lineage>
</organism>
<proteinExistence type="inferred from homology"/>
<accession>C0MGY6</accession>